<reference key="1">
    <citation type="journal article" date="2004" name="Proc. Natl. Acad. Sci. U.S.A.">
        <title>The diploid genome sequence of Candida albicans.</title>
        <authorList>
            <person name="Jones T."/>
            <person name="Federspiel N.A."/>
            <person name="Chibana H."/>
            <person name="Dungan J."/>
            <person name="Kalman S."/>
            <person name="Magee B.B."/>
            <person name="Newport G."/>
            <person name="Thorstenson Y.R."/>
            <person name="Agabian N."/>
            <person name="Magee P.T."/>
            <person name="Davis R.W."/>
            <person name="Scherer S."/>
        </authorList>
    </citation>
    <scope>NUCLEOTIDE SEQUENCE [LARGE SCALE GENOMIC DNA]</scope>
    <source>
        <strain>SC5314 / ATCC MYA-2876</strain>
    </source>
</reference>
<reference key="2">
    <citation type="journal article" date="2007" name="Genome Biol.">
        <title>Assembly of the Candida albicans genome into sixteen supercontigs aligned on the eight chromosomes.</title>
        <authorList>
            <person name="van het Hoog M."/>
            <person name="Rast T.J."/>
            <person name="Martchenko M."/>
            <person name="Grindle S."/>
            <person name="Dignard D."/>
            <person name="Hogues H."/>
            <person name="Cuomo C."/>
            <person name="Berriman M."/>
            <person name="Scherer S."/>
            <person name="Magee B.B."/>
            <person name="Whiteway M."/>
            <person name="Chibana H."/>
            <person name="Nantel A."/>
            <person name="Magee P.T."/>
        </authorList>
    </citation>
    <scope>GENOME REANNOTATION</scope>
    <source>
        <strain>SC5314 / ATCC MYA-2876</strain>
    </source>
</reference>
<reference key="3">
    <citation type="journal article" date="2013" name="Genome Biol.">
        <title>Assembly of a phased diploid Candida albicans genome facilitates allele-specific measurements and provides a simple model for repeat and indel structure.</title>
        <authorList>
            <person name="Muzzey D."/>
            <person name="Schwartz K."/>
            <person name="Weissman J.S."/>
            <person name="Sherlock G."/>
        </authorList>
    </citation>
    <scope>NUCLEOTIDE SEQUENCE [LARGE SCALE GENOMIC DNA]</scope>
    <scope>GENOME REANNOTATION</scope>
    <source>
        <strain>SC5314 / ATCC MYA-2876</strain>
    </source>
</reference>
<reference key="4">
    <citation type="journal article" date="2003" name="Yeast">
        <title>Genome-wide identification of fungal GPI proteins.</title>
        <authorList>
            <person name="De Groot P.W."/>
            <person name="Hellingwerf K.J."/>
            <person name="Klis F.M."/>
        </authorList>
    </citation>
    <scope>PREDICTION OF GPI-ANCHOR</scope>
</reference>
<reference key="5">
    <citation type="journal article" date="2013" name="Antimicrob. Agents Chemother.">
        <title>Milbemycins: more than efflux inhibitors for fungal pathogens.</title>
        <authorList>
            <person name="Silva L.V."/>
            <person name="Sanguinetti M."/>
            <person name="Vandeputte P."/>
            <person name="Torelli R."/>
            <person name="Rochat B."/>
            <person name="Sanglard D."/>
        </authorList>
    </citation>
    <scope>INDUCTION</scope>
</reference>
<reference key="6">
    <citation type="journal article" date="2011" name="Eukaryot. Cell">
        <title>Effects of fluconazole on the secretome, the wall proteome, and wall integrity of the clinical fungus Candida albicans.</title>
        <authorList>
            <person name="Sorgo A.G."/>
            <person name="Heilmann C.J."/>
            <person name="Dekker H.L."/>
            <person name="Bekker M."/>
            <person name="Brul S."/>
            <person name="de Koster C.G."/>
            <person name="de Koning L.J."/>
            <person name="Klis F.M."/>
        </authorList>
    </citation>
    <scope>IDENTIFICATION BY MASS SPECTROMETRY</scope>
    <scope>SUBCELLULAR LOCATION</scope>
</reference>
<name>PGA46_CANAL</name>
<feature type="signal peptide" evidence="1">
    <location>
        <begin position="1"/>
        <end position="29"/>
    </location>
</feature>
<feature type="chain" id="PRO_0000429950" description="Predicted GPI-anchored protein 46">
    <location>
        <begin position="30"/>
        <end position="314"/>
    </location>
</feature>
<feature type="propeptide" id="PRO_0000429951" description="Removed in mature form" evidence="1">
    <location>
        <begin position="315"/>
        <end position="340"/>
    </location>
</feature>
<feature type="region of interest" description="Disordered" evidence="2">
    <location>
        <begin position="99"/>
        <end position="154"/>
    </location>
</feature>
<feature type="region of interest" description="Disordered" evidence="2">
    <location>
        <begin position="181"/>
        <end position="212"/>
    </location>
</feature>
<feature type="compositionally biased region" description="Low complexity" evidence="2">
    <location>
        <begin position="99"/>
        <end position="115"/>
    </location>
</feature>
<feature type="compositionally biased region" description="Low complexity" evidence="2">
    <location>
        <begin position="182"/>
        <end position="191"/>
    </location>
</feature>
<feature type="compositionally biased region" description="Basic and acidic residues" evidence="2">
    <location>
        <begin position="192"/>
        <end position="202"/>
    </location>
</feature>
<feature type="lipid moiety-binding region" description="GPI-anchor amidated asparagine" evidence="1">
    <location>
        <position position="314"/>
    </location>
</feature>
<feature type="glycosylation site" description="N-linked (GlcNAc...) asparagine" evidence="1">
    <location>
        <position position="127"/>
    </location>
</feature>
<feature type="glycosylation site" description="N-linked (GlcNAc...) asparagine" evidence="1">
    <location>
        <position position="270"/>
    </location>
</feature>
<sequence>MKILLIYSMTPKLVIWFTLFVLCLQMGDTFDISINNEEIDNPGLIIKSKFKKYLPELQENLEIPITEKQQSIKESFIPRRINYPHYGLRSRFRKDIAISETTTTTTQESETSIATNGDSFDSDNGENKSDSSDDESSNNEGNDKSDATFKSLSSSSPTVVHSRRSWIKDFLIFKEQKVSTMSSSSSSSSGSLRDKSKLKQENKQLQSRIKNYDDTVSDPRDLKRWVRLIADEGKNEFGKKHSSKNYIQKNEIELDIEEFIHYLVEEQGFNSSDLEFLRLKNLDYGLGEIEKELNKLKEAKGSPKVISIGGEDENSAPLLWIKISKPTVCLVIALTFLLLG</sequence>
<keyword id="KW-1003">Cell membrane</keyword>
<keyword id="KW-0325">Glycoprotein</keyword>
<keyword id="KW-0336">GPI-anchor</keyword>
<keyword id="KW-0449">Lipoprotein</keyword>
<keyword id="KW-0472">Membrane</keyword>
<keyword id="KW-1185">Reference proteome</keyword>
<keyword id="KW-0964">Secreted</keyword>
<keyword id="KW-0732">Signal</keyword>
<dbReference type="EMBL" id="CP017624">
    <property type="protein sequence ID" value="AOW27832.1"/>
    <property type="molecule type" value="Genomic_DNA"/>
</dbReference>
<dbReference type="RefSeq" id="XP_714479.2">
    <property type="nucleotide sequence ID" value="XM_709386.2"/>
</dbReference>
<dbReference type="SMR" id="Q59Y11"/>
<dbReference type="STRING" id="237561.Q59Y11"/>
<dbReference type="GlyCosmos" id="Q59Y11">
    <property type="glycosylation" value="2 sites, No reported glycans"/>
</dbReference>
<dbReference type="EnsemblFungi" id="C2_08430C_A-T">
    <property type="protein sequence ID" value="C2_08430C_A-T-p1"/>
    <property type="gene ID" value="C2_08430C_A"/>
</dbReference>
<dbReference type="GeneID" id="3643896"/>
<dbReference type="KEGG" id="cal:CAALFM_C208430CA"/>
<dbReference type="CGD" id="CAL0000193043">
    <property type="gene designation" value="PGA46"/>
</dbReference>
<dbReference type="VEuPathDB" id="FungiDB:C2_08430C_A"/>
<dbReference type="eggNOG" id="ENOG502RQ6I">
    <property type="taxonomic scope" value="Eukaryota"/>
</dbReference>
<dbReference type="HOGENOM" id="CLU_882773_0_0_1"/>
<dbReference type="InParanoid" id="Q59Y11"/>
<dbReference type="OrthoDB" id="4087050at2759"/>
<dbReference type="PRO" id="PR:Q59Y11"/>
<dbReference type="Proteomes" id="UP000000559">
    <property type="component" value="Chromosome 2"/>
</dbReference>
<dbReference type="GO" id="GO:0005576">
    <property type="term" value="C:extracellular region"/>
    <property type="evidence" value="ECO:0007669"/>
    <property type="project" value="UniProtKB-SubCell"/>
</dbReference>
<dbReference type="GO" id="GO:0005886">
    <property type="term" value="C:plasma membrane"/>
    <property type="evidence" value="ECO:0007669"/>
    <property type="project" value="UniProtKB-SubCell"/>
</dbReference>
<dbReference type="GO" id="GO:0098552">
    <property type="term" value="C:side of membrane"/>
    <property type="evidence" value="ECO:0007669"/>
    <property type="project" value="UniProtKB-KW"/>
</dbReference>
<organism>
    <name type="scientific">Candida albicans (strain SC5314 / ATCC MYA-2876)</name>
    <name type="common">Yeast</name>
    <dbReference type="NCBI Taxonomy" id="237561"/>
    <lineage>
        <taxon>Eukaryota</taxon>
        <taxon>Fungi</taxon>
        <taxon>Dikarya</taxon>
        <taxon>Ascomycota</taxon>
        <taxon>Saccharomycotina</taxon>
        <taxon>Pichiomycetes</taxon>
        <taxon>Debaryomycetaceae</taxon>
        <taxon>Candida/Lodderomyces clade</taxon>
        <taxon>Candida</taxon>
    </lineage>
</organism>
<proteinExistence type="evidence at protein level"/>
<accession>Q59Y11</accession>
<accession>A0A1D8PI99</accession>
<protein>
    <recommendedName>
        <fullName>Predicted GPI-anchored protein 46</fullName>
    </recommendedName>
</protein>
<evidence type="ECO:0000255" key="1"/>
<evidence type="ECO:0000256" key="2">
    <source>
        <dbReference type="SAM" id="MobiDB-lite"/>
    </source>
</evidence>
<evidence type="ECO:0000269" key="3">
    <source>
    </source>
</evidence>
<evidence type="ECO:0000269" key="4">
    <source>
    </source>
</evidence>
<evidence type="ECO:0000305" key="5"/>
<comment type="subcellular location">
    <subcellularLocation>
        <location evidence="5">Cell membrane</location>
        <topology evidence="5">Lipid-anchor</topology>
        <topology evidence="5">GPI-anchor</topology>
    </subcellularLocation>
    <subcellularLocation>
        <location evidence="3">Secreted</location>
    </subcellularLocation>
</comment>
<comment type="induction">
    <text evidence="4">Up-regulated upon milbemycins A3 oxim derivative (A3Ox) treatment.</text>
</comment>
<gene>
    <name type="primary">PGA46</name>
    <name type="ordered locus">CAALFM_C208430CA</name>
    <name type="ORF">CaO19.11120</name>
    <name type="ORF">CaO19.3638</name>
</gene>